<name>TMA17_YEAST</name>
<reference key="1">
    <citation type="journal article" date="1996" name="Yeast">
        <title>The sequence of a 16,691 bp segment of Saccharomyces cerevisiae chromosome IV identifies the DUN1, PMT1, PMT5, SRP14 and DPR1 genes, and five new open reading frames.</title>
        <authorList>
            <person name="Boskovic J."/>
            <person name="Soler-Mira A."/>
            <person name="Garcia-Cantalejo J.M."/>
            <person name="Ballesta J.P.G."/>
            <person name="Jimenez A."/>
            <person name="Remacha M.A."/>
        </authorList>
    </citation>
    <scope>NUCLEOTIDE SEQUENCE [GENOMIC DNA]</scope>
    <source>
        <strain>ATCC 96604 / S288c / FY1679</strain>
    </source>
</reference>
<reference key="2">
    <citation type="journal article" date="1997" name="Nature">
        <title>The nucleotide sequence of Saccharomyces cerevisiae chromosome IV.</title>
        <authorList>
            <person name="Jacq C."/>
            <person name="Alt-Moerbe J."/>
            <person name="Andre B."/>
            <person name="Arnold W."/>
            <person name="Bahr A."/>
            <person name="Ballesta J.P.G."/>
            <person name="Bargues M."/>
            <person name="Baron L."/>
            <person name="Becker A."/>
            <person name="Biteau N."/>
            <person name="Bloecker H."/>
            <person name="Blugeon C."/>
            <person name="Boskovic J."/>
            <person name="Brandt P."/>
            <person name="Brueckner M."/>
            <person name="Buitrago M.J."/>
            <person name="Coster F."/>
            <person name="Delaveau T."/>
            <person name="del Rey F."/>
            <person name="Dujon B."/>
            <person name="Eide L.G."/>
            <person name="Garcia-Cantalejo J.M."/>
            <person name="Goffeau A."/>
            <person name="Gomez-Peris A."/>
            <person name="Granotier C."/>
            <person name="Hanemann V."/>
            <person name="Hankeln T."/>
            <person name="Hoheisel J.D."/>
            <person name="Jaeger W."/>
            <person name="Jimenez A."/>
            <person name="Jonniaux J.-L."/>
            <person name="Kraemer C."/>
            <person name="Kuester H."/>
            <person name="Laamanen P."/>
            <person name="Legros Y."/>
            <person name="Louis E.J."/>
            <person name="Moeller-Rieker S."/>
            <person name="Monnet A."/>
            <person name="Moro M."/>
            <person name="Mueller-Auer S."/>
            <person name="Nussbaumer B."/>
            <person name="Paricio N."/>
            <person name="Paulin L."/>
            <person name="Perea J."/>
            <person name="Perez-Alonso M."/>
            <person name="Perez-Ortin J.E."/>
            <person name="Pohl T.M."/>
            <person name="Prydz H."/>
            <person name="Purnelle B."/>
            <person name="Rasmussen S.W."/>
            <person name="Remacha M.A."/>
            <person name="Revuelta J.L."/>
            <person name="Rieger M."/>
            <person name="Salom D."/>
            <person name="Saluz H.P."/>
            <person name="Saiz J.E."/>
            <person name="Saren A.-M."/>
            <person name="Schaefer M."/>
            <person name="Scharfe M."/>
            <person name="Schmidt E.R."/>
            <person name="Schneider C."/>
            <person name="Scholler P."/>
            <person name="Schwarz S."/>
            <person name="Soler-Mira A."/>
            <person name="Urrestarazu L.A."/>
            <person name="Verhasselt P."/>
            <person name="Vissers S."/>
            <person name="Voet M."/>
            <person name="Volckaert G."/>
            <person name="Wagner G."/>
            <person name="Wambutt R."/>
            <person name="Wedler E."/>
            <person name="Wedler H."/>
            <person name="Woelfl S."/>
            <person name="Harris D.E."/>
            <person name="Bowman S."/>
            <person name="Brown D."/>
            <person name="Churcher C.M."/>
            <person name="Connor R."/>
            <person name="Dedman K."/>
            <person name="Gentles S."/>
            <person name="Hamlin N."/>
            <person name="Hunt S."/>
            <person name="Jones L."/>
            <person name="McDonald S."/>
            <person name="Murphy L.D."/>
            <person name="Niblett D."/>
            <person name="Odell C."/>
            <person name="Oliver K."/>
            <person name="Rajandream M.A."/>
            <person name="Richards C."/>
            <person name="Shore L."/>
            <person name="Walsh S.V."/>
            <person name="Barrell B.G."/>
            <person name="Dietrich F.S."/>
            <person name="Mulligan J.T."/>
            <person name="Allen E."/>
            <person name="Araujo R."/>
            <person name="Aviles E."/>
            <person name="Berno A."/>
            <person name="Carpenter J."/>
            <person name="Chen E."/>
            <person name="Cherry J.M."/>
            <person name="Chung E."/>
            <person name="Duncan M."/>
            <person name="Hunicke-Smith S."/>
            <person name="Hyman R.W."/>
            <person name="Komp C."/>
            <person name="Lashkari D."/>
            <person name="Lew H."/>
            <person name="Lin D."/>
            <person name="Mosedale D."/>
            <person name="Nakahara K."/>
            <person name="Namath A."/>
            <person name="Oefner P."/>
            <person name="Oh C."/>
            <person name="Petel F.X."/>
            <person name="Roberts D."/>
            <person name="Schramm S."/>
            <person name="Schroeder M."/>
            <person name="Shogren T."/>
            <person name="Shroff N."/>
            <person name="Winant A."/>
            <person name="Yelton M.A."/>
            <person name="Botstein D."/>
            <person name="Davis R.W."/>
            <person name="Johnston M."/>
            <person name="Andrews S."/>
            <person name="Brinkman R."/>
            <person name="Cooper J."/>
            <person name="Ding H."/>
            <person name="Du Z."/>
            <person name="Favello A."/>
            <person name="Fulton L."/>
            <person name="Gattung S."/>
            <person name="Greco T."/>
            <person name="Hallsworth K."/>
            <person name="Hawkins J."/>
            <person name="Hillier L.W."/>
            <person name="Jier M."/>
            <person name="Johnson D."/>
            <person name="Johnston L."/>
            <person name="Kirsten J."/>
            <person name="Kucaba T."/>
            <person name="Langston Y."/>
            <person name="Latreille P."/>
            <person name="Le T."/>
            <person name="Mardis E."/>
            <person name="Menezes S."/>
            <person name="Miller N."/>
            <person name="Nhan M."/>
            <person name="Pauley A."/>
            <person name="Peluso D."/>
            <person name="Rifkin L."/>
            <person name="Riles L."/>
            <person name="Taich A."/>
            <person name="Trevaskis E."/>
            <person name="Vignati D."/>
            <person name="Wilcox L."/>
            <person name="Wohldman P."/>
            <person name="Vaudin M."/>
            <person name="Wilson R."/>
            <person name="Waterston R."/>
            <person name="Albermann K."/>
            <person name="Hani J."/>
            <person name="Heumann K."/>
            <person name="Kleine K."/>
            <person name="Mewes H.-W."/>
            <person name="Zollner A."/>
            <person name="Zaccaria P."/>
        </authorList>
    </citation>
    <scope>NUCLEOTIDE SEQUENCE [LARGE SCALE GENOMIC DNA]</scope>
    <source>
        <strain>ATCC 204508 / S288c</strain>
    </source>
</reference>
<reference key="3">
    <citation type="journal article" date="2014" name="G3 (Bethesda)">
        <title>The reference genome sequence of Saccharomyces cerevisiae: Then and now.</title>
        <authorList>
            <person name="Engel S.R."/>
            <person name="Dietrich F.S."/>
            <person name="Fisk D.G."/>
            <person name="Binkley G."/>
            <person name="Balakrishnan R."/>
            <person name="Costanzo M.C."/>
            <person name="Dwight S.S."/>
            <person name="Hitz B.C."/>
            <person name="Karra K."/>
            <person name="Nash R.S."/>
            <person name="Weng S."/>
            <person name="Wong E.D."/>
            <person name="Lloyd P."/>
            <person name="Skrzypek M.S."/>
            <person name="Miyasato S.R."/>
            <person name="Simison M."/>
            <person name="Cherry J.M."/>
        </authorList>
    </citation>
    <scope>GENOME REANNOTATION</scope>
    <source>
        <strain>ATCC 204508 / S288c</strain>
    </source>
</reference>
<reference key="4">
    <citation type="journal article" date="2003" name="Nature">
        <title>Global analysis of protein localization in budding yeast.</title>
        <authorList>
            <person name="Huh W.-K."/>
            <person name="Falvo J.V."/>
            <person name="Gerke L.C."/>
            <person name="Carroll A.S."/>
            <person name="Howson R.W."/>
            <person name="Weissman J.S."/>
            <person name="O'Shea E.K."/>
        </authorList>
    </citation>
    <scope>SUBCELLULAR LOCATION [LARGE SCALE ANALYSIS]</scope>
</reference>
<reference key="5">
    <citation type="journal article" date="2003" name="Nature">
        <title>Global analysis of protein expression in yeast.</title>
        <authorList>
            <person name="Ghaemmaghami S."/>
            <person name="Huh W.-K."/>
            <person name="Bower K."/>
            <person name="Howson R.W."/>
            <person name="Belle A."/>
            <person name="Dephoure N."/>
            <person name="O'Shea E.K."/>
            <person name="Weissman J.S."/>
        </authorList>
    </citation>
    <scope>LEVEL OF PROTEIN EXPRESSION [LARGE SCALE ANALYSIS]</scope>
</reference>
<reference key="6">
    <citation type="journal article" date="2006" name="Genes Dev.">
        <title>Systematic identification and functional screens of uncharacterized proteins associated with eukaryotic ribosomal complexes.</title>
        <authorList>
            <person name="Fleischer T.C."/>
            <person name="Weaver C.M."/>
            <person name="McAfee K.J."/>
            <person name="Jennings J.L."/>
            <person name="Link A.J."/>
        </authorList>
    </citation>
    <scope>IDENTIFICATION BY MASS SPECTROMETRY</scope>
    <scope>SUBUNIT</scope>
</reference>
<reference key="7">
    <citation type="journal article" date="2007" name="J. Proteome Res.">
        <title>Large-scale phosphorylation analysis of alpha-factor-arrested Saccharomyces cerevisiae.</title>
        <authorList>
            <person name="Li X."/>
            <person name="Gerber S.A."/>
            <person name="Rudner A.D."/>
            <person name="Beausoleil S.A."/>
            <person name="Haas W."/>
            <person name="Villen J."/>
            <person name="Elias J.E."/>
            <person name="Gygi S.P."/>
        </authorList>
    </citation>
    <scope>PHOSPHORYLATION [LARGE SCALE ANALYSIS] AT SER-68</scope>
    <scope>IDENTIFICATION BY MASS SPECTROMETRY [LARGE SCALE ANALYSIS]</scope>
    <source>
        <strain>ADR376</strain>
    </source>
</reference>
<reference key="8">
    <citation type="journal article" date="2008" name="Mol. Cell. Proteomics">
        <title>A multidimensional chromatography technology for in-depth phosphoproteome analysis.</title>
        <authorList>
            <person name="Albuquerque C.P."/>
            <person name="Smolka M.B."/>
            <person name="Payne S.H."/>
            <person name="Bafna V."/>
            <person name="Eng J."/>
            <person name="Zhou H."/>
        </authorList>
    </citation>
    <scope>PHOSPHORYLATION [LARGE SCALE ANALYSIS] AT SER-24 AND SER-68</scope>
    <scope>IDENTIFICATION BY MASS SPECTROMETRY [LARGE SCALE ANALYSIS]</scope>
</reference>
<reference key="9">
    <citation type="journal article" date="2009" name="Science">
        <title>Global analysis of Cdk1 substrate phosphorylation sites provides insights into evolution.</title>
        <authorList>
            <person name="Holt L.J."/>
            <person name="Tuch B.B."/>
            <person name="Villen J."/>
            <person name="Johnson A.D."/>
            <person name="Gygi S.P."/>
            <person name="Morgan D.O."/>
        </authorList>
    </citation>
    <scope>PHOSPHORYLATION [LARGE SCALE ANALYSIS] AT SER-68</scope>
    <scope>IDENTIFICATION BY MASS SPECTROMETRY [LARGE SCALE ANALYSIS]</scope>
</reference>
<reference key="10">
    <citation type="journal article" date="2014" name="Mol. Cell">
        <title>An inducible chaperone adapts proteasome assembly to stress.</title>
        <authorList>
            <person name="Hanssum A."/>
            <person name="Zhong Z."/>
            <person name="Rousseau A."/>
            <person name="Krzyzosiak A."/>
            <person name="Sigurdardottir A."/>
            <person name="Bertolotti A."/>
        </authorList>
    </citation>
    <scope>DISRUPTION PHENOTYPE</scope>
    <scope>FUNCTION</scope>
    <scope>INTERACTION WITH RPT6</scope>
    <scope>INDUCTION</scope>
</reference>
<feature type="chain" id="PRO_0000240701" description="Translation machinery-associated protein 17">
    <location>
        <begin position="1"/>
        <end position="150"/>
    </location>
</feature>
<feature type="region of interest" description="Disordered" evidence="1">
    <location>
        <begin position="110"/>
        <end position="139"/>
    </location>
</feature>
<feature type="compositionally biased region" description="Basic and acidic residues" evidence="1">
    <location>
        <begin position="118"/>
        <end position="127"/>
    </location>
</feature>
<feature type="modified residue" description="Phosphoserine" evidence="7">
    <location>
        <position position="24"/>
    </location>
</feature>
<feature type="modified residue" description="Phosphoserine" evidence="6 7 8">
    <location>
        <position position="68"/>
    </location>
</feature>
<protein>
    <recommendedName>
        <fullName>Translation machinery-associated protein 17</fullName>
    </recommendedName>
    <alternativeName>
        <fullName>ATPase-dedicated chaperone of 17 kDa</fullName>
        <shortName>ADC17</shortName>
    </alternativeName>
</protein>
<organism>
    <name type="scientific">Saccharomyces cerevisiae (strain ATCC 204508 / S288c)</name>
    <name type="common">Baker's yeast</name>
    <dbReference type="NCBI Taxonomy" id="559292"/>
    <lineage>
        <taxon>Eukaryota</taxon>
        <taxon>Fungi</taxon>
        <taxon>Dikarya</taxon>
        <taxon>Ascomycota</taxon>
        <taxon>Saccharomycotina</taxon>
        <taxon>Saccharomycetes</taxon>
        <taxon>Saccharomycetales</taxon>
        <taxon>Saccharomycetaceae</taxon>
        <taxon>Saccharomyces</taxon>
    </lineage>
</organism>
<gene>
    <name type="primary">TMA17</name>
    <name type="ordered locus">YDL110C</name>
    <name type="ORF">D2320</name>
</gene>
<accession>Q12513</accession>
<accession>D6VRP0</accession>
<keyword id="KW-0002">3D-structure</keyword>
<keyword id="KW-0143">Chaperone</keyword>
<keyword id="KW-0963">Cytoplasm</keyword>
<keyword id="KW-0539">Nucleus</keyword>
<keyword id="KW-0597">Phosphoprotein</keyword>
<keyword id="KW-1185">Reference proteome</keyword>
<dbReference type="EMBL" id="X95644">
    <property type="protein sequence ID" value="CAA64902.1"/>
    <property type="molecule type" value="Genomic_DNA"/>
</dbReference>
<dbReference type="EMBL" id="Z74158">
    <property type="protein sequence ID" value="CAA98677.1"/>
    <property type="molecule type" value="Genomic_DNA"/>
</dbReference>
<dbReference type="EMBL" id="BK006938">
    <property type="protein sequence ID" value="DAA11750.1"/>
    <property type="molecule type" value="Genomic_DNA"/>
</dbReference>
<dbReference type="PIR" id="S67652">
    <property type="entry name" value="S67652"/>
</dbReference>
<dbReference type="RefSeq" id="NP_010173.1">
    <property type="nucleotide sequence ID" value="NM_001180169.1"/>
</dbReference>
<dbReference type="PDB" id="6QL5">
    <property type="method" value="EM"/>
    <property type="resolution" value="2.80 A"/>
    <property type="chains" value="M/N/O/P/Q/R=3-150"/>
</dbReference>
<dbReference type="PDB" id="6QL7">
    <property type="method" value="X-ray"/>
    <property type="resolution" value="4.60 A"/>
    <property type="chains" value="M/N/O/P/Q/R/m/n/o/p/q/r=1-150"/>
</dbReference>
<dbReference type="PDBsum" id="6QL5"/>
<dbReference type="PDBsum" id="6QL7"/>
<dbReference type="EMDB" id="EMD-4577"/>
<dbReference type="SMR" id="Q12513"/>
<dbReference type="BioGRID" id="31952">
    <property type="interactions" value="103"/>
</dbReference>
<dbReference type="DIP" id="DIP-1801N"/>
<dbReference type="FunCoup" id="Q12513">
    <property type="interactions" value="150"/>
</dbReference>
<dbReference type="IntAct" id="Q12513">
    <property type="interactions" value="3"/>
</dbReference>
<dbReference type="MINT" id="Q12513"/>
<dbReference type="STRING" id="4932.YDL110C"/>
<dbReference type="iPTMnet" id="Q12513"/>
<dbReference type="PaxDb" id="4932-YDL110C"/>
<dbReference type="PeptideAtlas" id="Q12513"/>
<dbReference type="EnsemblFungi" id="YDL110C_mRNA">
    <property type="protein sequence ID" value="YDL110C"/>
    <property type="gene ID" value="YDL110C"/>
</dbReference>
<dbReference type="GeneID" id="851448"/>
<dbReference type="KEGG" id="sce:YDL110C"/>
<dbReference type="AGR" id="SGD:S000002268"/>
<dbReference type="SGD" id="S000002268">
    <property type="gene designation" value="TMA17"/>
</dbReference>
<dbReference type="VEuPathDB" id="FungiDB:YDL110C"/>
<dbReference type="eggNOG" id="ENOG502S4G9">
    <property type="taxonomic scope" value="Eukaryota"/>
</dbReference>
<dbReference type="HOGENOM" id="CLU_141797_0_0_1"/>
<dbReference type="InParanoid" id="Q12513"/>
<dbReference type="OMA" id="NAPNSVY"/>
<dbReference type="OrthoDB" id="548474at2759"/>
<dbReference type="BioCyc" id="YEAST:G3O-29511-MONOMER"/>
<dbReference type="BRENDA" id="2.3.1.86">
    <property type="organism ID" value="984"/>
</dbReference>
<dbReference type="BioGRID-ORCS" id="851448">
    <property type="hits" value="1 hit in 10 CRISPR screens"/>
</dbReference>
<dbReference type="PRO" id="PR:Q12513"/>
<dbReference type="Proteomes" id="UP000002311">
    <property type="component" value="Chromosome IV"/>
</dbReference>
<dbReference type="RNAct" id="Q12513">
    <property type="molecule type" value="protein"/>
</dbReference>
<dbReference type="GO" id="GO:0005737">
    <property type="term" value="C:cytoplasm"/>
    <property type="evidence" value="ECO:0007005"/>
    <property type="project" value="SGD"/>
</dbReference>
<dbReference type="GO" id="GO:0005835">
    <property type="term" value="C:fatty acid synthase complex"/>
    <property type="evidence" value="ECO:0000314"/>
    <property type="project" value="SGD"/>
</dbReference>
<dbReference type="GO" id="GO:0005634">
    <property type="term" value="C:nucleus"/>
    <property type="evidence" value="ECO:0007005"/>
    <property type="project" value="SGD"/>
</dbReference>
<dbReference type="GO" id="GO:0008047">
    <property type="term" value="F:enzyme activator activity"/>
    <property type="evidence" value="ECO:0000314"/>
    <property type="project" value="SGD"/>
</dbReference>
<dbReference type="GO" id="GO:0030674">
    <property type="term" value="F:protein-macromolecule adaptor activity"/>
    <property type="evidence" value="ECO:0000314"/>
    <property type="project" value="SGD"/>
</dbReference>
<dbReference type="GO" id="GO:0006633">
    <property type="term" value="P:fatty acid biosynthetic process"/>
    <property type="evidence" value="ECO:0000315"/>
    <property type="project" value="SGD"/>
</dbReference>
<dbReference type="GO" id="GO:0070682">
    <property type="term" value="P:proteasome regulatory particle assembly"/>
    <property type="evidence" value="ECO:0000314"/>
    <property type="project" value="SGD"/>
</dbReference>
<dbReference type="InterPro" id="IPR038966">
    <property type="entry name" value="TMA17"/>
</dbReference>
<dbReference type="PANTHER" id="PTHR40422">
    <property type="entry name" value="TRANSLATION MACHINERY-ASSOCIATED PROTEIN 17"/>
    <property type="match status" value="1"/>
</dbReference>
<dbReference type="PANTHER" id="PTHR40422:SF1">
    <property type="entry name" value="TRANSLATION MACHINERY-ASSOCIATED PROTEIN 17"/>
    <property type="match status" value="1"/>
</dbReference>
<comment type="function">
    <text evidence="5">ATPase-dedicated chaperone that assists the formation of the RPT6-RPT3 ATPase pair, an early step in proteasome assembly. Plays a key role in maintaining homeostatic proteasome levels and adjusting proteasome assembly when demands increase, such as during proteasome stresses. Function overlaps with RPN14.</text>
</comment>
<comment type="subunit">
    <text evidence="4 5">Interacts with RPT6. Interacts with the 40S and 60S ribosomal subunits.</text>
</comment>
<comment type="subcellular location">
    <subcellularLocation>
        <location evidence="2">Cytoplasm</location>
    </subcellularLocation>
    <subcellularLocation>
        <location evidence="2">Nucleus</location>
    </subcellularLocation>
</comment>
<comment type="induction">
    <text evidence="5">Expression is increased in absence of RPN14 and upon treatment with tunicamycin, an agent which causes accumulation of misfolded proteins in the endoplasmic reticulum.</text>
</comment>
<comment type="disruption phenotype">
    <text evidence="5">Decreases cell fitness. Causes severe growth defects and an overload of polyubiquitinated conjugates when associated with a RPT6 thermosensitive proteasome mutant.</text>
</comment>
<comment type="miscellaneous">
    <text evidence="3">Present with 2110 molecules/cell in log phase SD medium.</text>
</comment>
<sequence length="150" mass="16771">MCSAGGIRRPIQIEEFKTAISGMSDMELAQIKTEIENSINHLQRSNARLGKYIAKLEGADDRLEADDSDDLENIDSGDLALYKDSVRENEIVLNNYNERVDALEQETVYRKTGHGKSKHEVEAKDNTNKGPDVDMDNSNVDVVTPNSIFI</sequence>
<proteinExistence type="evidence at protein level"/>
<evidence type="ECO:0000256" key="1">
    <source>
        <dbReference type="SAM" id="MobiDB-lite"/>
    </source>
</evidence>
<evidence type="ECO:0000269" key="2">
    <source>
    </source>
</evidence>
<evidence type="ECO:0000269" key="3">
    <source>
    </source>
</evidence>
<evidence type="ECO:0000269" key="4">
    <source>
    </source>
</evidence>
<evidence type="ECO:0000269" key="5">
    <source>
    </source>
</evidence>
<evidence type="ECO:0007744" key="6">
    <source>
    </source>
</evidence>
<evidence type="ECO:0007744" key="7">
    <source>
    </source>
</evidence>
<evidence type="ECO:0007744" key="8">
    <source>
    </source>
</evidence>